<keyword id="KW-0066">ATP synthesis</keyword>
<keyword id="KW-0997">Cell inner membrane</keyword>
<keyword id="KW-1003">Cell membrane</keyword>
<keyword id="KW-0139">CF(1)</keyword>
<keyword id="KW-0375">Hydrogen ion transport</keyword>
<keyword id="KW-0406">Ion transport</keyword>
<keyword id="KW-0472">Membrane</keyword>
<keyword id="KW-1185">Reference proteome</keyword>
<keyword id="KW-0813">Transport</keyword>
<sequence>MATIKVDVVSAEEQIFSGEAKFVALPGETGELGILPGHTPLITRIRPGAVRIEVEGGSDEFVFVAGGILEVQPGAVTVLADTAIRGKDLDAAKAEEARKRAEETLQNAKSDLDLAKAQSELATAMAQLEAIQRLAKIRSRH</sequence>
<reference key="1">
    <citation type="submission" date="2007-10" db="EMBL/GenBank/DDBJ databases">
        <title>Complete sequence of chromosome 1 of Burkholderia multivorans ATCC 17616.</title>
        <authorList>
            <person name="Copeland A."/>
            <person name="Lucas S."/>
            <person name="Lapidus A."/>
            <person name="Barry K."/>
            <person name="Glavina del Rio T."/>
            <person name="Dalin E."/>
            <person name="Tice H."/>
            <person name="Pitluck S."/>
            <person name="Chain P."/>
            <person name="Malfatti S."/>
            <person name="Shin M."/>
            <person name="Vergez L."/>
            <person name="Schmutz J."/>
            <person name="Larimer F."/>
            <person name="Land M."/>
            <person name="Hauser L."/>
            <person name="Kyrpides N."/>
            <person name="Kim E."/>
            <person name="Tiedje J."/>
            <person name="Richardson P."/>
        </authorList>
    </citation>
    <scope>NUCLEOTIDE SEQUENCE [LARGE SCALE GENOMIC DNA]</scope>
    <source>
        <strain>ATCC 17616 / 249</strain>
    </source>
</reference>
<reference key="2">
    <citation type="submission" date="2007-04" db="EMBL/GenBank/DDBJ databases">
        <title>Complete genome sequence of Burkholderia multivorans ATCC 17616.</title>
        <authorList>
            <person name="Ohtsubo Y."/>
            <person name="Yamashita A."/>
            <person name="Kurokawa K."/>
            <person name="Takami H."/>
            <person name="Yuhara S."/>
            <person name="Nishiyama E."/>
            <person name="Endo R."/>
            <person name="Miyazaki R."/>
            <person name="Ono A."/>
            <person name="Yano K."/>
            <person name="Ito M."/>
            <person name="Sota M."/>
            <person name="Yuji N."/>
            <person name="Hattori M."/>
            <person name="Tsuda M."/>
        </authorList>
    </citation>
    <scope>NUCLEOTIDE SEQUENCE [LARGE SCALE GENOMIC DNA]</scope>
    <source>
        <strain>ATCC 17616 / 249</strain>
    </source>
</reference>
<evidence type="ECO:0000255" key="1">
    <source>
        <dbReference type="HAMAP-Rule" id="MF_00530"/>
    </source>
</evidence>
<organism>
    <name type="scientific">Burkholderia multivorans (strain ATCC 17616 / 249)</name>
    <dbReference type="NCBI Taxonomy" id="395019"/>
    <lineage>
        <taxon>Bacteria</taxon>
        <taxon>Pseudomonadati</taxon>
        <taxon>Pseudomonadota</taxon>
        <taxon>Betaproteobacteria</taxon>
        <taxon>Burkholderiales</taxon>
        <taxon>Burkholderiaceae</taxon>
        <taxon>Burkholderia</taxon>
        <taxon>Burkholderia cepacia complex</taxon>
    </lineage>
</organism>
<dbReference type="EMBL" id="CP000868">
    <property type="protein sequence ID" value="ABX13802.1"/>
    <property type="molecule type" value="Genomic_DNA"/>
</dbReference>
<dbReference type="EMBL" id="AP009385">
    <property type="protein sequence ID" value="BAG45032.1"/>
    <property type="molecule type" value="Genomic_DNA"/>
</dbReference>
<dbReference type="RefSeq" id="WP_006401461.1">
    <property type="nucleotide sequence ID" value="NC_010804.1"/>
</dbReference>
<dbReference type="SMR" id="A9AJG5"/>
<dbReference type="STRING" id="395019.BMULJ_03158"/>
<dbReference type="KEGG" id="bmj:BMULJ_03158"/>
<dbReference type="KEGG" id="bmu:Bmul_0107"/>
<dbReference type="eggNOG" id="COG0355">
    <property type="taxonomic scope" value="Bacteria"/>
</dbReference>
<dbReference type="HOGENOM" id="CLU_084338_2_0_4"/>
<dbReference type="Proteomes" id="UP000008815">
    <property type="component" value="Chromosome 1"/>
</dbReference>
<dbReference type="GO" id="GO:0005886">
    <property type="term" value="C:plasma membrane"/>
    <property type="evidence" value="ECO:0007669"/>
    <property type="project" value="UniProtKB-SubCell"/>
</dbReference>
<dbReference type="GO" id="GO:0045259">
    <property type="term" value="C:proton-transporting ATP synthase complex"/>
    <property type="evidence" value="ECO:0007669"/>
    <property type="project" value="UniProtKB-KW"/>
</dbReference>
<dbReference type="GO" id="GO:0005524">
    <property type="term" value="F:ATP binding"/>
    <property type="evidence" value="ECO:0007669"/>
    <property type="project" value="UniProtKB-UniRule"/>
</dbReference>
<dbReference type="GO" id="GO:0046933">
    <property type="term" value="F:proton-transporting ATP synthase activity, rotational mechanism"/>
    <property type="evidence" value="ECO:0007669"/>
    <property type="project" value="UniProtKB-UniRule"/>
</dbReference>
<dbReference type="CDD" id="cd12152">
    <property type="entry name" value="F1-ATPase_delta"/>
    <property type="match status" value="1"/>
</dbReference>
<dbReference type="FunFam" id="2.60.15.10:FF:000001">
    <property type="entry name" value="ATP synthase epsilon chain"/>
    <property type="match status" value="1"/>
</dbReference>
<dbReference type="Gene3D" id="1.20.5.440">
    <property type="entry name" value="ATP synthase delta/epsilon subunit, C-terminal domain"/>
    <property type="match status" value="1"/>
</dbReference>
<dbReference type="Gene3D" id="2.60.15.10">
    <property type="entry name" value="F0F1 ATP synthase delta/epsilon subunit, N-terminal"/>
    <property type="match status" value="1"/>
</dbReference>
<dbReference type="HAMAP" id="MF_00530">
    <property type="entry name" value="ATP_synth_epsil_bac"/>
    <property type="match status" value="1"/>
</dbReference>
<dbReference type="InterPro" id="IPR036794">
    <property type="entry name" value="ATP_F1_dsu/esu_C_sf"/>
</dbReference>
<dbReference type="InterPro" id="IPR001469">
    <property type="entry name" value="ATP_synth_F1_dsu/esu"/>
</dbReference>
<dbReference type="InterPro" id="IPR020546">
    <property type="entry name" value="ATP_synth_F1_dsu/esu_N"/>
</dbReference>
<dbReference type="InterPro" id="IPR020547">
    <property type="entry name" value="ATP_synth_F1_esu_C"/>
</dbReference>
<dbReference type="InterPro" id="IPR036771">
    <property type="entry name" value="ATPsynth_dsu/esu_N"/>
</dbReference>
<dbReference type="NCBIfam" id="TIGR01216">
    <property type="entry name" value="ATP_synt_epsi"/>
    <property type="match status" value="1"/>
</dbReference>
<dbReference type="NCBIfam" id="NF001847">
    <property type="entry name" value="PRK00571.1-4"/>
    <property type="match status" value="1"/>
</dbReference>
<dbReference type="PANTHER" id="PTHR13822">
    <property type="entry name" value="ATP SYNTHASE DELTA/EPSILON CHAIN"/>
    <property type="match status" value="1"/>
</dbReference>
<dbReference type="PANTHER" id="PTHR13822:SF10">
    <property type="entry name" value="ATP SYNTHASE EPSILON CHAIN, CHLOROPLASTIC"/>
    <property type="match status" value="1"/>
</dbReference>
<dbReference type="Pfam" id="PF00401">
    <property type="entry name" value="ATP-synt_DE"/>
    <property type="match status" value="1"/>
</dbReference>
<dbReference type="Pfam" id="PF02823">
    <property type="entry name" value="ATP-synt_DE_N"/>
    <property type="match status" value="1"/>
</dbReference>
<dbReference type="SUPFAM" id="SSF46604">
    <property type="entry name" value="Epsilon subunit of F1F0-ATP synthase C-terminal domain"/>
    <property type="match status" value="1"/>
</dbReference>
<dbReference type="SUPFAM" id="SSF51344">
    <property type="entry name" value="Epsilon subunit of F1F0-ATP synthase N-terminal domain"/>
    <property type="match status" value="1"/>
</dbReference>
<proteinExistence type="inferred from homology"/>
<gene>
    <name evidence="1" type="primary">atpC</name>
    <name type="ordered locus">Bmul_0107</name>
    <name type="ordered locus">BMULJ_03158</name>
</gene>
<feature type="chain" id="PRO_1000127832" description="ATP synthase epsilon chain">
    <location>
        <begin position="1"/>
        <end position="141"/>
    </location>
</feature>
<comment type="function">
    <text evidence="1">Produces ATP from ADP in the presence of a proton gradient across the membrane.</text>
</comment>
<comment type="subunit">
    <text evidence="1">F-type ATPases have 2 components, CF(1) - the catalytic core - and CF(0) - the membrane proton channel. CF(1) has five subunits: alpha(3), beta(3), gamma(1), delta(1), epsilon(1). CF(0) has three main subunits: a, b and c.</text>
</comment>
<comment type="subcellular location">
    <subcellularLocation>
        <location evidence="1">Cell inner membrane</location>
        <topology evidence="1">Peripheral membrane protein</topology>
    </subcellularLocation>
</comment>
<comment type="similarity">
    <text evidence="1">Belongs to the ATPase epsilon chain family.</text>
</comment>
<protein>
    <recommendedName>
        <fullName evidence="1">ATP synthase epsilon chain</fullName>
    </recommendedName>
    <alternativeName>
        <fullName evidence="1">ATP synthase F1 sector epsilon subunit</fullName>
    </alternativeName>
    <alternativeName>
        <fullName evidence="1">F-ATPase epsilon subunit</fullName>
    </alternativeName>
</protein>
<accession>A9AJG5</accession>
<name>ATPE_BURM1</name>